<dbReference type="EMBL" id="BC056283">
    <property type="protein sequence ID" value="AAH56283.1"/>
    <property type="molecule type" value="mRNA"/>
</dbReference>
<dbReference type="EMBL" id="BC067553">
    <property type="protein sequence ID" value="AAH67553.1"/>
    <property type="molecule type" value="mRNA"/>
</dbReference>
<dbReference type="RefSeq" id="NP_998324.1">
    <property type="nucleotide sequence ID" value="NM_213159.1"/>
</dbReference>
<dbReference type="SMR" id="Q7SZR5"/>
<dbReference type="FunCoup" id="Q7SZR5">
    <property type="interactions" value="1052"/>
</dbReference>
<dbReference type="STRING" id="7955.ENSDARP00000064994"/>
<dbReference type="PaxDb" id="7955-ENSDARP00000064994"/>
<dbReference type="PeptideAtlas" id="Q7SZR5"/>
<dbReference type="Ensembl" id="ENSDART00000064995">
    <property type="protein sequence ID" value="ENSDARP00000064994"/>
    <property type="gene ID" value="ENSDARG00000044267"/>
</dbReference>
<dbReference type="GeneID" id="406438"/>
<dbReference type="KEGG" id="dre:406438"/>
<dbReference type="AGR" id="ZFIN:ZDB-GENE-040426-2186"/>
<dbReference type="CTD" id="7341"/>
<dbReference type="ZFIN" id="ZDB-GENE-040426-2186">
    <property type="gene designation" value="sumo1"/>
</dbReference>
<dbReference type="eggNOG" id="KOG1769">
    <property type="taxonomic scope" value="Eukaryota"/>
</dbReference>
<dbReference type="HOGENOM" id="CLU_148322_4_2_1"/>
<dbReference type="InParanoid" id="Q7SZR5"/>
<dbReference type="OMA" id="KMSTQMG"/>
<dbReference type="OrthoDB" id="442921at2759"/>
<dbReference type="PhylomeDB" id="Q7SZR5"/>
<dbReference type="TreeFam" id="TF315116"/>
<dbReference type="Reactome" id="R-DRE-3065676">
    <property type="pathway name" value="SUMO is conjugated to E1 (UBA2:SAE1)"/>
</dbReference>
<dbReference type="Reactome" id="R-DRE-3065678">
    <property type="pathway name" value="SUMO is transferred from E1 to E2 (UBE2I, UBC9)"/>
</dbReference>
<dbReference type="Reactome" id="R-DRE-3108214">
    <property type="pathway name" value="SUMOylation of DNA damage response and repair proteins"/>
</dbReference>
<dbReference type="Reactome" id="R-DRE-3232118">
    <property type="pathway name" value="SUMOylation of transcription factors"/>
</dbReference>
<dbReference type="Reactome" id="R-DRE-3232142">
    <property type="pathway name" value="SUMOylation of ubiquitinylation proteins"/>
</dbReference>
<dbReference type="Reactome" id="R-DRE-3899300">
    <property type="pathway name" value="SUMOylation of transcription cofactors"/>
</dbReference>
<dbReference type="Reactome" id="R-DRE-4085377">
    <property type="pathway name" value="SUMOylation of SUMOylation proteins"/>
</dbReference>
<dbReference type="Reactome" id="R-DRE-4090294">
    <property type="pathway name" value="SUMOylation of intracellular receptors"/>
</dbReference>
<dbReference type="Reactome" id="R-DRE-4551638">
    <property type="pathway name" value="SUMOylation of chromatin organization proteins"/>
</dbReference>
<dbReference type="Reactome" id="R-DRE-4570464">
    <property type="pathway name" value="SUMOylation of RNA binding proteins"/>
</dbReference>
<dbReference type="Reactome" id="R-DRE-4615885">
    <property type="pathway name" value="SUMOylation of DNA replication proteins"/>
</dbReference>
<dbReference type="Reactome" id="R-DRE-4655427">
    <property type="pathway name" value="SUMOylation of DNA methylation proteins"/>
</dbReference>
<dbReference type="Reactome" id="R-DRE-4755510">
    <property type="pathway name" value="SUMOylation of immune response proteins"/>
</dbReference>
<dbReference type="Reactome" id="R-DRE-8866904">
    <property type="pathway name" value="Negative regulation of activity of TFAP2 (AP-2) family transcription factors"/>
</dbReference>
<dbReference type="Reactome" id="R-DRE-9615933">
    <property type="pathway name" value="Postmitotic nuclear pore complex (NPC) reformation"/>
</dbReference>
<dbReference type="Reactome" id="R-DRE-9793242">
    <property type="pathway name" value="SUMOylation of nuclear envelope proteins"/>
</dbReference>
<dbReference type="Reactome" id="R-DRE-9856649">
    <property type="pathway name" value="Transcriptional and post-translational regulation of MITF-M expression and activity"/>
</dbReference>
<dbReference type="PRO" id="PR:Q7SZR5"/>
<dbReference type="Proteomes" id="UP000000437">
    <property type="component" value="Chromosome 6"/>
</dbReference>
<dbReference type="Bgee" id="ENSDARG00000044267">
    <property type="expression patterns" value="Expressed in testis and 29 other cell types or tissues"/>
</dbReference>
<dbReference type="GO" id="GO:0005737">
    <property type="term" value="C:cytoplasm"/>
    <property type="evidence" value="ECO:0007669"/>
    <property type="project" value="UniProtKB-SubCell"/>
</dbReference>
<dbReference type="GO" id="GO:0031965">
    <property type="term" value="C:nuclear membrane"/>
    <property type="evidence" value="ECO:0007669"/>
    <property type="project" value="UniProtKB-SubCell"/>
</dbReference>
<dbReference type="GO" id="GO:0016607">
    <property type="term" value="C:nuclear speck"/>
    <property type="evidence" value="ECO:0007669"/>
    <property type="project" value="UniProtKB-SubCell"/>
</dbReference>
<dbReference type="GO" id="GO:0097165">
    <property type="term" value="C:nuclear stress granule"/>
    <property type="evidence" value="ECO:0000250"/>
    <property type="project" value="UniProtKB"/>
</dbReference>
<dbReference type="GO" id="GO:0005634">
    <property type="term" value="C:nucleus"/>
    <property type="evidence" value="ECO:0000318"/>
    <property type="project" value="GO_Central"/>
</dbReference>
<dbReference type="GO" id="GO:0005886">
    <property type="term" value="C:plasma membrane"/>
    <property type="evidence" value="ECO:0007669"/>
    <property type="project" value="UniProtKB-SubCell"/>
</dbReference>
<dbReference type="GO" id="GO:0016605">
    <property type="term" value="C:PML body"/>
    <property type="evidence" value="ECO:0007669"/>
    <property type="project" value="UniProtKB-SubCell"/>
</dbReference>
<dbReference type="GO" id="GO:0031386">
    <property type="term" value="F:protein tag activity"/>
    <property type="evidence" value="ECO:0000318"/>
    <property type="project" value="GO_Central"/>
</dbReference>
<dbReference type="GO" id="GO:0044389">
    <property type="term" value="F:ubiquitin-like protein ligase binding"/>
    <property type="evidence" value="ECO:0000318"/>
    <property type="project" value="GO_Central"/>
</dbReference>
<dbReference type="GO" id="GO:0071276">
    <property type="term" value="P:cellular response to cadmium ion"/>
    <property type="evidence" value="ECO:0000250"/>
    <property type="project" value="UniProtKB"/>
</dbReference>
<dbReference type="GO" id="GO:0034605">
    <property type="term" value="P:cellular response to heat"/>
    <property type="evidence" value="ECO:0000250"/>
    <property type="project" value="UniProtKB"/>
</dbReference>
<dbReference type="GO" id="GO:0043009">
    <property type="term" value="P:chordate embryonic development"/>
    <property type="evidence" value="ECO:0000316"/>
    <property type="project" value="ZFIN"/>
</dbReference>
<dbReference type="GO" id="GO:0060216">
    <property type="term" value="P:definitive hemopoiesis"/>
    <property type="evidence" value="ECO:0000316"/>
    <property type="project" value="ZFIN"/>
</dbReference>
<dbReference type="GO" id="GO:0016925">
    <property type="term" value="P:protein sumoylation"/>
    <property type="evidence" value="ECO:0000318"/>
    <property type="project" value="GO_Central"/>
</dbReference>
<dbReference type="CDD" id="cd16114">
    <property type="entry name" value="Ubl_SUMO1"/>
    <property type="match status" value="1"/>
</dbReference>
<dbReference type="FunFam" id="3.10.20.90:FF:000190">
    <property type="entry name" value="Small ubiquitin-related modifier"/>
    <property type="match status" value="1"/>
</dbReference>
<dbReference type="Gene3D" id="3.10.20.90">
    <property type="entry name" value="Phosphatidylinositol 3-kinase Catalytic Subunit, Chain A, domain 1"/>
    <property type="match status" value="1"/>
</dbReference>
<dbReference type="InterPro" id="IPR022617">
    <property type="entry name" value="Rad60/SUMO-like_dom"/>
</dbReference>
<dbReference type="InterPro" id="IPR046332">
    <property type="entry name" value="SUMO1_Ubl"/>
</dbReference>
<dbReference type="InterPro" id="IPR000626">
    <property type="entry name" value="Ubiquitin-like_dom"/>
</dbReference>
<dbReference type="InterPro" id="IPR029071">
    <property type="entry name" value="Ubiquitin-like_domsf"/>
</dbReference>
<dbReference type="PANTHER" id="PTHR10562">
    <property type="entry name" value="SMALL UBIQUITIN-RELATED MODIFIER"/>
    <property type="match status" value="1"/>
</dbReference>
<dbReference type="Pfam" id="PF11976">
    <property type="entry name" value="Rad60-SLD"/>
    <property type="match status" value="1"/>
</dbReference>
<dbReference type="SMART" id="SM00213">
    <property type="entry name" value="UBQ"/>
    <property type="match status" value="1"/>
</dbReference>
<dbReference type="SUPFAM" id="SSF54236">
    <property type="entry name" value="Ubiquitin-like"/>
    <property type="match status" value="1"/>
</dbReference>
<dbReference type="PROSITE" id="PS50053">
    <property type="entry name" value="UBIQUITIN_2"/>
    <property type="match status" value="1"/>
</dbReference>
<gene>
    <name type="primary">sumo1</name>
    <name type="ORF">zgc:65934</name>
    <name type="ORF">zgc:85634</name>
</gene>
<reference key="1">
    <citation type="submission" date="2003-08" db="EMBL/GenBank/DDBJ databases">
        <authorList>
            <consortium name="NIH - Zebrafish Gene Collection (ZGC) project"/>
        </authorList>
    </citation>
    <scope>NUCLEOTIDE SEQUENCE [LARGE SCALE MRNA]</scope>
    <source>
        <tissue>Embryo</tissue>
        <tissue>Kidney</tissue>
    </source>
</reference>
<organism>
    <name type="scientific">Danio rerio</name>
    <name type="common">Zebrafish</name>
    <name type="synonym">Brachydanio rerio</name>
    <dbReference type="NCBI Taxonomy" id="7955"/>
    <lineage>
        <taxon>Eukaryota</taxon>
        <taxon>Metazoa</taxon>
        <taxon>Chordata</taxon>
        <taxon>Craniata</taxon>
        <taxon>Vertebrata</taxon>
        <taxon>Euteleostomi</taxon>
        <taxon>Actinopterygii</taxon>
        <taxon>Neopterygii</taxon>
        <taxon>Teleostei</taxon>
        <taxon>Ostariophysi</taxon>
        <taxon>Cypriniformes</taxon>
        <taxon>Danionidae</taxon>
        <taxon>Danioninae</taxon>
        <taxon>Danio</taxon>
    </lineage>
</organism>
<accession>Q7SZR5</accession>
<protein>
    <recommendedName>
        <fullName>Small ubiquitin-related modifier 1</fullName>
        <shortName>SUMO-1</shortName>
    </recommendedName>
</protein>
<feature type="chain" id="PRO_0000267612" description="Small ubiquitin-related modifier 1">
    <location>
        <begin position="1"/>
        <end position="96"/>
    </location>
</feature>
<feature type="propeptide" id="PRO_0000267613" evidence="1">
    <location>
        <begin position="97"/>
        <end position="100"/>
    </location>
</feature>
<feature type="domain" description="Ubiquitin-like" evidence="4">
    <location>
        <begin position="19"/>
        <end position="96"/>
    </location>
</feature>
<feature type="cross-link" description="Glycyl lysine isopeptide (Gly-Lys) (interchain with K-? in acceptor proteins)" evidence="4">
    <location>
        <position position="96"/>
    </location>
</feature>
<evidence type="ECO:0000250" key="1"/>
<evidence type="ECO:0000250" key="2">
    <source>
        <dbReference type="UniProtKB" id="P63165"/>
    </source>
</evidence>
<evidence type="ECO:0000250" key="3">
    <source>
        <dbReference type="UniProtKB" id="P63166"/>
    </source>
</evidence>
<evidence type="ECO:0000255" key="4">
    <source>
        <dbReference type="PROSITE-ProRule" id="PRU00214"/>
    </source>
</evidence>
<evidence type="ECO:0000305" key="5"/>
<proteinExistence type="inferred from homology"/>
<name>SUMO1_DANRE</name>
<comment type="function">
    <text evidence="2">Ubiquitin-like protein that can be covalently attached to proteins as a monomer or a lysine-linked polymer. Covalent attachment via an isopeptide bond to its substrates requires prior activation by the E1 complex sae1-sae2 and linkage to the E2 enzyme ube2i. This post-translational modification on lysine residues of proteins plays a crucial role in a number of cellular processes such as nuclear transport, DNA replication and repair, mitosis and signal transduction. Polymeric sumo1 chains are also susceptible to polyubiquitination which functions as a signal for proteasomal degradation of modified proteins.</text>
</comment>
<comment type="subunit">
    <text evidence="2">Interacts with sae2, ube2i, ranbp2, pias1 and pias2 (By similarity). Covalently attached to a number of proteins (By similarity).</text>
</comment>
<comment type="subcellular location">
    <subcellularLocation>
        <location evidence="2">Nucleus membrane</location>
    </subcellularLocation>
    <subcellularLocation>
        <location evidence="3">Nucleus speckle</location>
    </subcellularLocation>
    <subcellularLocation>
        <location evidence="2">Cytoplasm</location>
    </subcellularLocation>
    <subcellularLocation>
        <location evidence="2">Nucleus</location>
        <location evidence="2">PML body</location>
    </subcellularLocation>
    <subcellularLocation>
        <location evidence="2">Cell membrane</location>
    </subcellularLocation>
    <subcellularLocation>
        <location evidence="2">Nucleus</location>
    </subcellularLocation>
</comment>
<comment type="PTM">
    <text evidence="2">Cleavage of precursor form by a sentrin-specific protease is necessary for function.</text>
</comment>
<comment type="similarity">
    <text evidence="5">Belongs to the ubiquitin family. SUMO subfamily.</text>
</comment>
<sequence length="100" mass="11396">MSDTETKPSSDGGEKKDGEYIKLKVIGQDNSEIHFKVKMTTHLKKLKESYSQRQGVPVNSLRFLFEGQRITDNLTPKELGMEDEDVIEVYQEQTGGCRND</sequence>
<keyword id="KW-1003">Cell membrane</keyword>
<keyword id="KW-0963">Cytoplasm</keyword>
<keyword id="KW-1017">Isopeptide bond</keyword>
<keyword id="KW-0472">Membrane</keyword>
<keyword id="KW-0539">Nucleus</keyword>
<keyword id="KW-1185">Reference proteome</keyword>
<keyword id="KW-0833">Ubl conjugation pathway</keyword>